<feature type="chain" id="PRO_0000101956" description="UDP-N-acetylmuramoyl-L-alanyl-D-glutamate--L-lysine ligase">
    <location>
        <begin position="1"/>
        <end position="481"/>
    </location>
</feature>
<feature type="short sequence motif" description="L-lysine recognition motif">
    <location>
        <begin position="404"/>
        <end position="407"/>
    </location>
</feature>
<feature type="binding site" evidence="1">
    <location>
        <position position="42"/>
    </location>
    <ligand>
        <name>UDP-N-acetyl-alpha-D-muramoyl-L-alanyl-D-glutamate</name>
        <dbReference type="ChEBI" id="CHEBI:83900"/>
    </ligand>
</feature>
<feature type="binding site" evidence="1">
    <location>
        <begin position="118"/>
        <end position="124"/>
    </location>
    <ligand>
        <name>ATP</name>
        <dbReference type="ChEBI" id="CHEBI:30616"/>
    </ligand>
</feature>
<feature type="binding site" evidence="1">
    <location>
        <position position="158"/>
    </location>
    <ligand>
        <name>UDP-N-acetyl-alpha-D-muramoyl-L-alanyl-D-glutamate</name>
        <dbReference type="ChEBI" id="CHEBI:83900"/>
    </ligand>
</feature>
<feature type="binding site" evidence="1">
    <location>
        <begin position="160"/>
        <end position="161"/>
    </location>
    <ligand>
        <name>UDP-N-acetyl-alpha-D-muramoyl-L-alanyl-D-glutamate</name>
        <dbReference type="ChEBI" id="CHEBI:83900"/>
    </ligand>
</feature>
<feature type="binding site" evidence="1">
    <location>
        <position position="187"/>
    </location>
    <ligand>
        <name>UDP-N-acetyl-alpha-D-muramoyl-L-alanyl-D-glutamate</name>
        <dbReference type="ChEBI" id="CHEBI:83900"/>
    </ligand>
</feature>
<feature type="binding site" evidence="1">
    <location>
        <position position="195"/>
    </location>
    <ligand>
        <name>UDP-N-acetyl-alpha-D-muramoyl-L-alanyl-D-glutamate</name>
        <dbReference type="ChEBI" id="CHEBI:83900"/>
    </ligand>
</feature>
<feature type="modified residue" description="N6-carboxylysine" evidence="1">
    <location>
        <position position="229"/>
    </location>
</feature>
<evidence type="ECO:0000255" key="1">
    <source>
        <dbReference type="HAMAP-Rule" id="MF_00208"/>
    </source>
</evidence>
<keyword id="KW-0067">ATP-binding</keyword>
<keyword id="KW-0131">Cell cycle</keyword>
<keyword id="KW-0132">Cell division</keyword>
<keyword id="KW-0133">Cell shape</keyword>
<keyword id="KW-0961">Cell wall biogenesis/degradation</keyword>
<keyword id="KW-0963">Cytoplasm</keyword>
<keyword id="KW-0436">Ligase</keyword>
<keyword id="KW-0547">Nucleotide-binding</keyword>
<keyword id="KW-0573">Peptidoglycan synthesis</keyword>
<proteinExistence type="inferred from homology"/>
<name>MURE_STRP3</name>
<accession>P0DC54</accession>
<accession>Q8K8H6</accession>
<organism>
    <name type="scientific">Streptococcus pyogenes serotype M3 (strain ATCC BAA-595 / MGAS315)</name>
    <dbReference type="NCBI Taxonomy" id="198466"/>
    <lineage>
        <taxon>Bacteria</taxon>
        <taxon>Bacillati</taxon>
        <taxon>Bacillota</taxon>
        <taxon>Bacilli</taxon>
        <taxon>Lactobacillales</taxon>
        <taxon>Streptococcaceae</taxon>
        <taxon>Streptococcus</taxon>
    </lineage>
</organism>
<dbReference type="EC" id="6.3.2.7" evidence="1"/>
<dbReference type="EMBL" id="AE014074">
    <property type="protein sequence ID" value="AAM78891.1"/>
    <property type="molecule type" value="Genomic_DNA"/>
</dbReference>
<dbReference type="RefSeq" id="WP_011054217.1">
    <property type="nucleotide sequence ID" value="NC_004070.1"/>
</dbReference>
<dbReference type="SMR" id="P0DC54"/>
<dbReference type="KEGG" id="spg:SpyM3_0284"/>
<dbReference type="HOGENOM" id="CLU_022291_4_2_9"/>
<dbReference type="UniPathway" id="UPA00219"/>
<dbReference type="Proteomes" id="UP000000564">
    <property type="component" value="Chromosome"/>
</dbReference>
<dbReference type="GO" id="GO:0005737">
    <property type="term" value="C:cytoplasm"/>
    <property type="evidence" value="ECO:0007669"/>
    <property type="project" value="UniProtKB-SubCell"/>
</dbReference>
<dbReference type="GO" id="GO:0005524">
    <property type="term" value="F:ATP binding"/>
    <property type="evidence" value="ECO:0007669"/>
    <property type="project" value="UniProtKB-UniRule"/>
</dbReference>
<dbReference type="GO" id="GO:0000287">
    <property type="term" value="F:magnesium ion binding"/>
    <property type="evidence" value="ECO:0007669"/>
    <property type="project" value="UniProtKB-UniRule"/>
</dbReference>
<dbReference type="GO" id="GO:0047482">
    <property type="term" value="F:UDP-N-acetylmuramoyl-L-alanyl-D-glutamate-L-lysine ligase activity"/>
    <property type="evidence" value="ECO:0007669"/>
    <property type="project" value="UniProtKB-UniRule"/>
</dbReference>
<dbReference type="GO" id="GO:0051301">
    <property type="term" value="P:cell division"/>
    <property type="evidence" value="ECO:0007669"/>
    <property type="project" value="UniProtKB-KW"/>
</dbReference>
<dbReference type="GO" id="GO:0071555">
    <property type="term" value="P:cell wall organization"/>
    <property type="evidence" value="ECO:0007669"/>
    <property type="project" value="UniProtKB-KW"/>
</dbReference>
<dbReference type="GO" id="GO:0009252">
    <property type="term" value="P:peptidoglycan biosynthetic process"/>
    <property type="evidence" value="ECO:0007669"/>
    <property type="project" value="UniProtKB-UniRule"/>
</dbReference>
<dbReference type="GO" id="GO:0008360">
    <property type="term" value="P:regulation of cell shape"/>
    <property type="evidence" value="ECO:0007669"/>
    <property type="project" value="UniProtKB-KW"/>
</dbReference>
<dbReference type="Gene3D" id="3.90.190.20">
    <property type="entry name" value="Mur ligase, C-terminal domain"/>
    <property type="match status" value="1"/>
</dbReference>
<dbReference type="Gene3D" id="3.40.1190.10">
    <property type="entry name" value="Mur-like, catalytic domain"/>
    <property type="match status" value="1"/>
</dbReference>
<dbReference type="Gene3D" id="3.40.1390.10">
    <property type="entry name" value="MurE/MurF, N-terminal domain"/>
    <property type="match status" value="1"/>
</dbReference>
<dbReference type="HAMAP" id="MF_00208">
    <property type="entry name" value="MurE"/>
    <property type="match status" value="1"/>
</dbReference>
<dbReference type="InterPro" id="IPR036565">
    <property type="entry name" value="Mur-like_cat_sf"/>
</dbReference>
<dbReference type="InterPro" id="IPR004101">
    <property type="entry name" value="Mur_ligase_C"/>
</dbReference>
<dbReference type="InterPro" id="IPR036615">
    <property type="entry name" value="Mur_ligase_C_dom_sf"/>
</dbReference>
<dbReference type="InterPro" id="IPR013221">
    <property type="entry name" value="Mur_ligase_cen"/>
</dbReference>
<dbReference type="InterPro" id="IPR035911">
    <property type="entry name" value="MurE/MurF_N"/>
</dbReference>
<dbReference type="InterPro" id="IPR005761">
    <property type="entry name" value="UDP-N-AcMur-Glu-dNH2Pim_ligase"/>
</dbReference>
<dbReference type="NCBIfam" id="TIGR01085">
    <property type="entry name" value="murE"/>
    <property type="match status" value="1"/>
</dbReference>
<dbReference type="NCBIfam" id="NF010628">
    <property type="entry name" value="PRK14022.1"/>
    <property type="match status" value="1"/>
</dbReference>
<dbReference type="PANTHER" id="PTHR23135">
    <property type="entry name" value="MUR LIGASE FAMILY MEMBER"/>
    <property type="match status" value="1"/>
</dbReference>
<dbReference type="PANTHER" id="PTHR23135:SF4">
    <property type="entry name" value="UDP-N-ACETYLMURAMOYL-L-ALANYL-D-GLUTAMATE--2,6-DIAMINOPIMELATE LIGASE MURE HOMOLOG, CHLOROPLASTIC"/>
    <property type="match status" value="1"/>
</dbReference>
<dbReference type="Pfam" id="PF02875">
    <property type="entry name" value="Mur_ligase_C"/>
    <property type="match status" value="1"/>
</dbReference>
<dbReference type="Pfam" id="PF08245">
    <property type="entry name" value="Mur_ligase_M"/>
    <property type="match status" value="1"/>
</dbReference>
<dbReference type="SUPFAM" id="SSF53623">
    <property type="entry name" value="MurD-like peptide ligases, catalytic domain"/>
    <property type="match status" value="1"/>
</dbReference>
<dbReference type="SUPFAM" id="SSF53244">
    <property type="entry name" value="MurD-like peptide ligases, peptide-binding domain"/>
    <property type="match status" value="1"/>
</dbReference>
<dbReference type="SUPFAM" id="SSF63418">
    <property type="entry name" value="MurE/MurF N-terminal domain"/>
    <property type="match status" value="1"/>
</dbReference>
<reference key="1">
    <citation type="journal article" date="2002" name="Proc. Natl. Acad. Sci. U.S.A.">
        <title>Genome sequence of a serotype M3 strain of group A Streptococcus: phage-encoded toxins, the high-virulence phenotype, and clone emergence.</title>
        <authorList>
            <person name="Beres S.B."/>
            <person name="Sylva G.L."/>
            <person name="Barbian K.D."/>
            <person name="Lei B."/>
            <person name="Hoff J.S."/>
            <person name="Mammarella N.D."/>
            <person name="Liu M.-Y."/>
            <person name="Smoot J.C."/>
            <person name="Porcella S.F."/>
            <person name="Parkins L.D."/>
            <person name="Campbell D.S."/>
            <person name="Smith T.M."/>
            <person name="McCormick J.K."/>
            <person name="Leung D.Y.M."/>
            <person name="Schlievert P.M."/>
            <person name="Musser J.M."/>
        </authorList>
    </citation>
    <scope>NUCLEOTIDE SEQUENCE [LARGE SCALE GENOMIC DNA]</scope>
    <source>
        <strain>ATCC BAA-595 / MGAS315</strain>
    </source>
</reference>
<comment type="function">
    <text evidence="1">Catalyzes the addition of L-lysine to the nucleotide precursor UDP-N-acetylmuramoyl-L-alanyl-D-glutamate (UMAG) in the biosynthesis of bacterial cell-wall peptidoglycan.</text>
</comment>
<comment type="catalytic activity">
    <reaction evidence="1">
        <text>UDP-N-acetyl-alpha-D-muramoyl-L-alanyl-D-glutamate + L-lysine + ATP = UDP-N-acetyl-alpha-D-muramoyl-L-alanyl-gamma-D-glutamyl-L-lysine + ADP + phosphate + H(+)</text>
        <dbReference type="Rhea" id="RHEA:17969"/>
        <dbReference type="ChEBI" id="CHEBI:15378"/>
        <dbReference type="ChEBI" id="CHEBI:30616"/>
        <dbReference type="ChEBI" id="CHEBI:32551"/>
        <dbReference type="ChEBI" id="CHEBI:43474"/>
        <dbReference type="ChEBI" id="CHEBI:83900"/>
        <dbReference type="ChEBI" id="CHEBI:83903"/>
        <dbReference type="ChEBI" id="CHEBI:456216"/>
        <dbReference type="EC" id="6.3.2.7"/>
    </reaction>
</comment>
<comment type="pathway">
    <text evidence="1">Cell wall biogenesis; peptidoglycan biosynthesis.</text>
</comment>
<comment type="subcellular location">
    <subcellularLocation>
        <location evidence="1">Cytoplasm</location>
    </subcellularLocation>
</comment>
<comment type="PTM">
    <text evidence="1">Carboxylation is probably crucial for Mg(2+) binding and, consequently, for the gamma-phosphate positioning of ATP.</text>
</comment>
<comment type="similarity">
    <text evidence="1">Belongs to the MurCDEF family. MurE subfamily.</text>
</comment>
<protein>
    <recommendedName>
        <fullName evidence="1">UDP-N-acetylmuramoyl-L-alanyl-D-glutamate--L-lysine ligase</fullName>
        <ecNumber evidence="1">6.3.2.7</ecNumber>
    </recommendedName>
    <alternativeName>
        <fullName evidence="1">L-lysine-adding enzyme</fullName>
    </alternativeName>
    <alternativeName>
        <fullName evidence="1">UDP-MurNAc-L-Ala-D-Glu:L-Lys ligase</fullName>
    </alternativeName>
    <alternativeName>
        <fullName evidence="1">UDP-MurNAc-tripeptide synthetase</fullName>
    </alternativeName>
    <alternativeName>
        <fullName evidence="1">UDP-N-acetylmuramyl-tripeptide synthetase</fullName>
    </alternativeName>
</protein>
<gene>
    <name evidence="1" type="primary">murE</name>
    <name type="ordered locus">SpyM3_0284</name>
</gene>
<sequence length="481" mass="53627">MITIEQLLDILKKDHNFREVLDADEYHYHYQGFSFERLSYDSRQVDGKTLFFAKGATFKADYLKEAITNGLQLYISEVDYELGIPVVLVTDIKKAMSLIAMAFYGNPQEKLKLLAFTGTKGKTTAAYFAYHMLKESYKPAMFSTMNTTLDGKTFFKSQLTTPESLDLFAMMAECVTNGMTHLIMEVSSQAYLVDRVYGLTFDVGVFLNISPDHIGPIEHPTFEDYFYHKRLLMENSRAVVINSVMDHFSFLADQVADQEHVFYGPLSDNQITTSQAFSFEAKGQLAGHYDIQLIGHFNQENAMAAGLACLRLGASLADIQKGIAKTRVPGRMEVLTMTNHAKVFVDYAHNGDSLEKLLSVVEEHQTGKLMLILGAPGNKGESRRADFGRVIHQHPNLTVILTADDPNFEDPEDISKEIASHIARPVEIISDREQAIQKAMSLCQGAKDAVIIAGKGADAYQIVKGQQVAYAGDLAIAKHYL</sequence>